<feature type="chain" id="PRO_1000078765" description="Nucleoid-associated protein Cvib_1034">
    <location>
        <begin position="1"/>
        <end position="109"/>
    </location>
</feature>
<dbReference type="EMBL" id="CP000607">
    <property type="protein sequence ID" value="ABP37048.1"/>
    <property type="molecule type" value="Genomic_DNA"/>
</dbReference>
<dbReference type="SMR" id="A4SEY9"/>
<dbReference type="STRING" id="290318.Cvib_1034"/>
<dbReference type="KEGG" id="pvi:Cvib_1034"/>
<dbReference type="eggNOG" id="COG0718">
    <property type="taxonomic scope" value="Bacteria"/>
</dbReference>
<dbReference type="HOGENOM" id="CLU_140930_0_1_10"/>
<dbReference type="OrthoDB" id="9808738at2"/>
<dbReference type="GO" id="GO:0043590">
    <property type="term" value="C:bacterial nucleoid"/>
    <property type="evidence" value="ECO:0007669"/>
    <property type="project" value="UniProtKB-UniRule"/>
</dbReference>
<dbReference type="GO" id="GO:0005829">
    <property type="term" value="C:cytosol"/>
    <property type="evidence" value="ECO:0007669"/>
    <property type="project" value="TreeGrafter"/>
</dbReference>
<dbReference type="GO" id="GO:0003677">
    <property type="term" value="F:DNA binding"/>
    <property type="evidence" value="ECO:0007669"/>
    <property type="project" value="UniProtKB-UniRule"/>
</dbReference>
<dbReference type="Gene3D" id="3.30.1310.10">
    <property type="entry name" value="Nucleoid-associated protein YbaB-like domain"/>
    <property type="match status" value="1"/>
</dbReference>
<dbReference type="HAMAP" id="MF_00274">
    <property type="entry name" value="DNA_YbaB_EbfC"/>
    <property type="match status" value="1"/>
</dbReference>
<dbReference type="InterPro" id="IPR036894">
    <property type="entry name" value="YbaB-like_sf"/>
</dbReference>
<dbReference type="InterPro" id="IPR004401">
    <property type="entry name" value="YbaB/EbfC"/>
</dbReference>
<dbReference type="NCBIfam" id="TIGR00103">
    <property type="entry name" value="DNA_YbaB_EbfC"/>
    <property type="match status" value="1"/>
</dbReference>
<dbReference type="PANTHER" id="PTHR33449">
    <property type="entry name" value="NUCLEOID-ASSOCIATED PROTEIN YBAB"/>
    <property type="match status" value="1"/>
</dbReference>
<dbReference type="PANTHER" id="PTHR33449:SF1">
    <property type="entry name" value="NUCLEOID-ASSOCIATED PROTEIN YBAB"/>
    <property type="match status" value="1"/>
</dbReference>
<dbReference type="Pfam" id="PF02575">
    <property type="entry name" value="YbaB_DNA_bd"/>
    <property type="match status" value="1"/>
</dbReference>
<dbReference type="PIRSF" id="PIRSF004555">
    <property type="entry name" value="UCP004555"/>
    <property type="match status" value="1"/>
</dbReference>
<dbReference type="SUPFAM" id="SSF82607">
    <property type="entry name" value="YbaB-like"/>
    <property type="match status" value="1"/>
</dbReference>
<keyword id="KW-0963">Cytoplasm</keyword>
<keyword id="KW-0238">DNA-binding</keyword>
<accession>A4SEY9</accession>
<proteinExistence type="inferred from homology"/>
<evidence type="ECO:0000255" key="1">
    <source>
        <dbReference type="HAMAP-Rule" id="MF_00274"/>
    </source>
</evidence>
<comment type="function">
    <text evidence="1">Binds to DNA and alters its conformation. May be involved in regulation of gene expression, nucleoid organization and DNA protection.</text>
</comment>
<comment type="subunit">
    <text evidence="1">Homodimer.</text>
</comment>
<comment type="subcellular location">
    <subcellularLocation>
        <location evidence="1">Cytoplasm</location>
        <location evidence="1">Nucleoid</location>
    </subcellularLocation>
</comment>
<comment type="similarity">
    <text evidence="1">Belongs to the YbaB/EbfC family.</text>
</comment>
<name>Y1034_CHLPM</name>
<gene>
    <name type="ordered locus">Cvib_1034</name>
</gene>
<reference key="1">
    <citation type="submission" date="2007-03" db="EMBL/GenBank/DDBJ databases">
        <title>Complete sequence of Prosthecochloris vibrioformis DSM 265.</title>
        <authorList>
            <consortium name="US DOE Joint Genome Institute"/>
            <person name="Copeland A."/>
            <person name="Lucas S."/>
            <person name="Lapidus A."/>
            <person name="Barry K."/>
            <person name="Detter J.C."/>
            <person name="Glavina del Rio T."/>
            <person name="Hammon N."/>
            <person name="Israni S."/>
            <person name="Pitluck S."/>
            <person name="Schmutz J."/>
            <person name="Larimer F."/>
            <person name="Land M."/>
            <person name="Hauser L."/>
            <person name="Mikhailova N."/>
            <person name="Li T."/>
            <person name="Overmann J."/>
            <person name="Schuster S.C."/>
            <person name="Bryant D.A."/>
            <person name="Richardson P."/>
        </authorList>
    </citation>
    <scope>NUCLEOTIDE SEQUENCE [LARGE SCALE GENOMIC DNA]</scope>
    <source>
        <strain>DSM 265 / 1930</strain>
    </source>
</reference>
<sequence>MEMPNLGDMMKQIQQAGAKMQDVQKQLEKTVTHGEAGGGMVKVSVNGRQRLLSLAIDPDIMDDREMVQDLVLAAVNSAIEESGRVSQEEIAKVAGGMINPADILKNMGK</sequence>
<protein>
    <recommendedName>
        <fullName evidence="1">Nucleoid-associated protein Cvib_1034</fullName>
    </recommendedName>
</protein>
<organism>
    <name type="scientific">Chlorobium phaeovibrioides (strain DSM 265 / 1930)</name>
    <name type="common">Prosthecochloris vibrioformis (strain DSM 265)</name>
    <dbReference type="NCBI Taxonomy" id="290318"/>
    <lineage>
        <taxon>Bacteria</taxon>
        <taxon>Pseudomonadati</taxon>
        <taxon>Chlorobiota</taxon>
        <taxon>Chlorobiia</taxon>
        <taxon>Chlorobiales</taxon>
        <taxon>Chlorobiaceae</taxon>
        <taxon>Chlorobium/Pelodictyon group</taxon>
        <taxon>Chlorobium</taxon>
    </lineage>
</organism>